<comment type="function">
    <text evidence="1">This is one of the proteins that bind and probably mediate the attachment of the 5S RNA into the large ribosomal subunit, where it forms part of the central protuberance. In the 70S ribosome it contacts protein S13 of the 30S subunit (bridge B1b), connecting the 2 subunits; this bridge is implicated in subunit movement. Contacts the P site tRNA; the 5S rRNA and some of its associated proteins might help stabilize positioning of ribosome-bound tRNAs.</text>
</comment>
<comment type="subunit">
    <text evidence="1">Part of the 50S ribosomal subunit; part of the 5S rRNA/L5/L18/L25 subcomplex. Contacts the 5S rRNA and the P site tRNA. Forms a bridge to the 30S subunit in the 70S ribosome.</text>
</comment>
<comment type="similarity">
    <text evidence="1">Belongs to the universal ribosomal protein uL5 family.</text>
</comment>
<name>RL5_YERPN</name>
<accession>Q1CCV6</accession>
<accession>D1Q2K9</accession>
<keyword id="KW-0687">Ribonucleoprotein</keyword>
<keyword id="KW-0689">Ribosomal protein</keyword>
<keyword id="KW-0694">RNA-binding</keyword>
<keyword id="KW-0699">rRNA-binding</keyword>
<keyword id="KW-0820">tRNA-binding</keyword>
<dbReference type="EMBL" id="CP000305">
    <property type="protein sequence ID" value="ABG20174.1"/>
    <property type="molecule type" value="Genomic_DNA"/>
</dbReference>
<dbReference type="EMBL" id="ACNQ01000019">
    <property type="protein sequence ID" value="EEO74762.1"/>
    <property type="molecule type" value="Genomic_DNA"/>
</dbReference>
<dbReference type="RefSeq" id="WP_002213329.1">
    <property type="nucleotide sequence ID" value="NZ_ACNQ01000019.1"/>
</dbReference>
<dbReference type="SMR" id="Q1CCV6"/>
<dbReference type="GeneID" id="96663184"/>
<dbReference type="KEGG" id="ypn:YPN_3847"/>
<dbReference type="HOGENOM" id="CLU_061015_2_1_6"/>
<dbReference type="Proteomes" id="UP000008936">
    <property type="component" value="Chromosome"/>
</dbReference>
<dbReference type="GO" id="GO:1990904">
    <property type="term" value="C:ribonucleoprotein complex"/>
    <property type="evidence" value="ECO:0007669"/>
    <property type="project" value="UniProtKB-KW"/>
</dbReference>
<dbReference type="GO" id="GO:0005840">
    <property type="term" value="C:ribosome"/>
    <property type="evidence" value="ECO:0007669"/>
    <property type="project" value="UniProtKB-KW"/>
</dbReference>
<dbReference type="GO" id="GO:0019843">
    <property type="term" value="F:rRNA binding"/>
    <property type="evidence" value="ECO:0007669"/>
    <property type="project" value="UniProtKB-UniRule"/>
</dbReference>
<dbReference type="GO" id="GO:0003735">
    <property type="term" value="F:structural constituent of ribosome"/>
    <property type="evidence" value="ECO:0007669"/>
    <property type="project" value="InterPro"/>
</dbReference>
<dbReference type="GO" id="GO:0000049">
    <property type="term" value="F:tRNA binding"/>
    <property type="evidence" value="ECO:0007669"/>
    <property type="project" value="UniProtKB-UniRule"/>
</dbReference>
<dbReference type="GO" id="GO:0006412">
    <property type="term" value="P:translation"/>
    <property type="evidence" value="ECO:0007669"/>
    <property type="project" value="UniProtKB-UniRule"/>
</dbReference>
<dbReference type="FunFam" id="3.30.1440.10:FF:000001">
    <property type="entry name" value="50S ribosomal protein L5"/>
    <property type="match status" value="1"/>
</dbReference>
<dbReference type="Gene3D" id="3.30.1440.10">
    <property type="match status" value="1"/>
</dbReference>
<dbReference type="HAMAP" id="MF_01333_B">
    <property type="entry name" value="Ribosomal_uL5_B"/>
    <property type="match status" value="1"/>
</dbReference>
<dbReference type="InterPro" id="IPR002132">
    <property type="entry name" value="Ribosomal_uL5"/>
</dbReference>
<dbReference type="InterPro" id="IPR020930">
    <property type="entry name" value="Ribosomal_uL5_bac-type"/>
</dbReference>
<dbReference type="InterPro" id="IPR031309">
    <property type="entry name" value="Ribosomal_uL5_C"/>
</dbReference>
<dbReference type="InterPro" id="IPR022803">
    <property type="entry name" value="Ribosomal_uL5_dom_sf"/>
</dbReference>
<dbReference type="InterPro" id="IPR031310">
    <property type="entry name" value="Ribosomal_uL5_N"/>
</dbReference>
<dbReference type="NCBIfam" id="NF000585">
    <property type="entry name" value="PRK00010.1"/>
    <property type="match status" value="1"/>
</dbReference>
<dbReference type="PANTHER" id="PTHR11994">
    <property type="entry name" value="60S RIBOSOMAL PROTEIN L11-RELATED"/>
    <property type="match status" value="1"/>
</dbReference>
<dbReference type="Pfam" id="PF00281">
    <property type="entry name" value="Ribosomal_L5"/>
    <property type="match status" value="1"/>
</dbReference>
<dbReference type="Pfam" id="PF00673">
    <property type="entry name" value="Ribosomal_L5_C"/>
    <property type="match status" value="1"/>
</dbReference>
<dbReference type="PIRSF" id="PIRSF002161">
    <property type="entry name" value="Ribosomal_L5"/>
    <property type="match status" value="1"/>
</dbReference>
<dbReference type="SUPFAM" id="SSF55282">
    <property type="entry name" value="RL5-like"/>
    <property type="match status" value="1"/>
</dbReference>
<gene>
    <name evidence="1" type="primary">rplE</name>
    <name type="ordered locus">YPN_3847</name>
    <name type="ORF">YP516_4370</name>
</gene>
<reference key="1">
    <citation type="journal article" date="2006" name="J. Bacteriol.">
        <title>Complete genome sequence of Yersinia pestis strains Antiqua and Nepal516: evidence of gene reduction in an emerging pathogen.</title>
        <authorList>
            <person name="Chain P.S.G."/>
            <person name="Hu P."/>
            <person name="Malfatti S.A."/>
            <person name="Radnedge L."/>
            <person name="Larimer F."/>
            <person name="Vergez L.M."/>
            <person name="Worsham P."/>
            <person name="Chu M.C."/>
            <person name="Andersen G.L."/>
        </authorList>
    </citation>
    <scope>NUCLEOTIDE SEQUENCE [LARGE SCALE GENOMIC DNA]</scope>
    <source>
        <strain>Nepal516</strain>
    </source>
</reference>
<reference key="2">
    <citation type="submission" date="2009-04" db="EMBL/GenBank/DDBJ databases">
        <title>Yersinia pestis Nepal516A whole genome shotgun sequencing project.</title>
        <authorList>
            <person name="Plunkett G. III"/>
            <person name="Anderson B.D."/>
            <person name="Baumler D.J."/>
            <person name="Burland V."/>
            <person name="Cabot E.L."/>
            <person name="Glasner J.D."/>
            <person name="Mau B."/>
            <person name="Neeno-Eckwall E."/>
            <person name="Perna N.T."/>
            <person name="Munk A.C."/>
            <person name="Tapia R."/>
            <person name="Green L.D."/>
            <person name="Rogers Y.C."/>
            <person name="Detter J.C."/>
            <person name="Bruce D.C."/>
            <person name="Brettin T.S."/>
        </authorList>
    </citation>
    <scope>NUCLEOTIDE SEQUENCE [LARGE SCALE GENOMIC DNA]</scope>
    <source>
        <strain>Nepal516</strain>
    </source>
</reference>
<proteinExistence type="inferred from homology"/>
<feature type="chain" id="PRO_1000052858" description="Large ribosomal subunit protein uL5">
    <location>
        <begin position="1"/>
        <end position="179"/>
    </location>
</feature>
<organism>
    <name type="scientific">Yersinia pestis bv. Antiqua (strain Nepal516)</name>
    <dbReference type="NCBI Taxonomy" id="377628"/>
    <lineage>
        <taxon>Bacteria</taxon>
        <taxon>Pseudomonadati</taxon>
        <taxon>Pseudomonadota</taxon>
        <taxon>Gammaproteobacteria</taxon>
        <taxon>Enterobacterales</taxon>
        <taxon>Yersiniaceae</taxon>
        <taxon>Yersinia</taxon>
    </lineage>
</organism>
<protein>
    <recommendedName>
        <fullName evidence="1">Large ribosomal subunit protein uL5</fullName>
    </recommendedName>
    <alternativeName>
        <fullName evidence="2">50S ribosomal protein L5</fullName>
    </alternativeName>
</protein>
<sequence>MAKLHDYYKDEVVKQLMSQFGYDSVMQVPRVEKITLNMGVGEAIADKKLLDNAAADLAAISGQKPFITKARKSVAGFKIRQGYPIGCKVTLRGERMWEFFERLITIAVPRIRDFRGLSAKSFDGRGNYSMGVREQIIFPEIDYDKVDRVRGLDITITTTAKSDDEGRALLAAFKFPFRK</sequence>
<evidence type="ECO:0000255" key="1">
    <source>
        <dbReference type="HAMAP-Rule" id="MF_01333"/>
    </source>
</evidence>
<evidence type="ECO:0000305" key="2"/>